<protein>
    <recommendedName>
        <fullName>Protein snail homolog Sna</fullName>
        <shortName>Protein Xsnail</shortName>
        <shortName>Protein xSna</shortName>
    </recommendedName>
</protein>
<comment type="function">
    <text evidence="4 5 6">Transcriptional repressor. Acts upstream of snai2/slug, zic5 and other neural crest markers in the specification of the neural crest and neural crest migration. Involved in embryonic mesoderm formation.</text>
</comment>
<comment type="subunit">
    <text evidence="5 7">Interacts (via SNAG domain) with limd1 (via LIM domains), wtip (via LIM domains) and ajuba (via LIM domains) (PubMed:18331720). Interacts with elp3; the interaction inhibits snai1 ubiquitination and promotes snai1 stability (PubMed:27189455).</text>
</comment>
<comment type="subcellular location">
    <subcellularLocation>
        <location evidence="8">Nucleus</location>
    </subcellularLocation>
</comment>
<comment type="tissue specificity">
    <text evidence="4 6">Maternal expression is nearly completely restricted to the vegetal hemisphere. Zygotic expression begins in the dorsal marginal zone just before gastrulation (stage 9), and is almost completely absent in the animal hemisphere. At mid-gastrula (stage 11-11.5), expression begins in the ectoderm in an arc surrounding the prospective neural plate. From stage 12, anterior expression is down-regulated, while levels are increased in the prospective neural crest.</text>
</comment>
<comment type="developmental stage">
    <text evidence="6">Expressed both maternally and zygotically. Expressed in embryos at a low level prior to the onset of zygotic transcription. Zygotically first expressed at stage 9, increasing to a plateau from stage 12 to 18, and decreasing to some extent after stage 25, although expression persists until at least stage 40.</text>
</comment>
<comment type="induction">
    <text evidence="6">By two classes of mesoderm inducing factors: transforming growth factor-beta (TGF-beta) family and fibroblast growth factor (FGF).</text>
</comment>
<comment type="PTM">
    <text evidence="7">Ubiquitinated.</text>
</comment>
<comment type="similarity">
    <text evidence="8">Belongs to the snail C2H2-type zinc-finger protein family.</text>
</comment>
<keyword id="KW-0217">Developmental protein</keyword>
<keyword id="KW-0238">DNA-binding</keyword>
<keyword id="KW-0479">Metal-binding</keyword>
<keyword id="KW-0539">Nucleus</keyword>
<keyword id="KW-1185">Reference proteome</keyword>
<keyword id="KW-0677">Repeat</keyword>
<keyword id="KW-0832">Ubl conjugation</keyword>
<keyword id="KW-0862">Zinc</keyword>
<keyword id="KW-0863">Zinc-finger</keyword>
<proteinExistence type="evidence at protein level"/>
<accession>P19382</accession>
<accession>Q5PRF8</accession>
<sequence length="259" mass="29108">MPRSFLVKKHFSASKKPNYSELESQTVYISPFIYDKFPVIPQPEILSTGAYYTPLVWDTGLLTTFFTSESDYKKSPISPSSSDDSSKPLDLTSFSSEDEGGKTSDPPSPASSATEAEKFQCNLCSKSYSTFAGLSKHKQLHCDSQTRKSFSCKYCEKEYVSLGALKMHIRSHTLPCVCKICGKAFSRPWLLQGHIRTHTGEKPFSCTHCNRAFADRSNLRAHLQTHSDVKKYQCKSCSRTFSRMSLLHKHEETGCTVAH</sequence>
<dbReference type="EMBL" id="X53450">
    <property type="protein sequence ID" value="CAA37528.1"/>
    <property type="molecule type" value="mRNA"/>
</dbReference>
<dbReference type="EMBL" id="BC056857">
    <property type="protein sequence ID" value="AAH56857.1"/>
    <property type="molecule type" value="mRNA"/>
</dbReference>
<dbReference type="PIR" id="S12078">
    <property type="entry name" value="S12078"/>
</dbReference>
<dbReference type="RefSeq" id="NP_001079925.1">
    <property type="nucleotide sequence ID" value="NM_001086456.1"/>
</dbReference>
<dbReference type="SMR" id="P19382"/>
<dbReference type="DNASU" id="379615"/>
<dbReference type="GeneID" id="379615"/>
<dbReference type="KEGG" id="xla:379615"/>
<dbReference type="AGR" id="Xenbase:XB-GENE-17344016"/>
<dbReference type="CTD" id="379615"/>
<dbReference type="Xenbase" id="XB-GENE-17344016">
    <property type="gene designation" value="snai1.L"/>
</dbReference>
<dbReference type="OrthoDB" id="5428132at2759"/>
<dbReference type="Proteomes" id="UP000186698">
    <property type="component" value="Chromosome 9_10L"/>
</dbReference>
<dbReference type="Bgee" id="379615">
    <property type="expression patterns" value="Expressed in neurula embryo and 18 other cell types or tissues"/>
</dbReference>
<dbReference type="GO" id="GO:0005634">
    <property type="term" value="C:nucleus"/>
    <property type="evidence" value="ECO:0000250"/>
    <property type="project" value="UniProtKB"/>
</dbReference>
<dbReference type="GO" id="GO:0000981">
    <property type="term" value="F:DNA-binding transcription factor activity, RNA polymerase II-specific"/>
    <property type="evidence" value="ECO:0000318"/>
    <property type="project" value="GO_Central"/>
</dbReference>
<dbReference type="GO" id="GO:0000978">
    <property type="term" value="F:RNA polymerase II cis-regulatory region sequence-specific DNA binding"/>
    <property type="evidence" value="ECO:0000318"/>
    <property type="project" value="GO_Central"/>
</dbReference>
<dbReference type="GO" id="GO:0008270">
    <property type="term" value="F:zinc ion binding"/>
    <property type="evidence" value="ECO:0007669"/>
    <property type="project" value="UniProtKB-KW"/>
</dbReference>
<dbReference type="GO" id="GO:0045892">
    <property type="term" value="P:negative regulation of DNA-templated transcription"/>
    <property type="evidence" value="ECO:0000314"/>
    <property type="project" value="UniProtKB"/>
</dbReference>
<dbReference type="GO" id="GO:0000122">
    <property type="term" value="P:negative regulation of transcription by RNA polymerase II"/>
    <property type="evidence" value="ECO:0000314"/>
    <property type="project" value="UniProtKB"/>
</dbReference>
<dbReference type="GO" id="GO:0014036">
    <property type="term" value="P:neural crest cell fate specification"/>
    <property type="evidence" value="ECO:0000315"/>
    <property type="project" value="UniProtKB"/>
</dbReference>
<dbReference type="GO" id="GO:0001755">
    <property type="term" value="P:neural crest cell migration"/>
    <property type="evidence" value="ECO:0000315"/>
    <property type="project" value="UniProtKB"/>
</dbReference>
<dbReference type="GO" id="GO:0014029">
    <property type="term" value="P:neural crest formation"/>
    <property type="evidence" value="ECO:0000304"/>
    <property type="project" value="AgBase"/>
</dbReference>
<dbReference type="GO" id="GO:0006355">
    <property type="term" value="P:regulation of DNA-templated transcription"/>
    <property type="evidence" value="ECO:0000318"/>
    <property type="project" value="GO_Central"/>
</dbReference>
<dbReference type="FunFam" id="3.30.160.60:FF:001869">
    <property type="entry name" value="Snail family zinc finger 1"/>
    <property type="match status" value="1"/>
</dbReference>
<dbReference type="FunFam" id="3.30.160.60:FF:000085">
    <property type="entry name" value="Snail zinc finger protein"/>
    <property type="match status" value="1"/>
</dbReference>
<dbReference type="FunFam" id="3.30.160.60:FF:000942">
    <property type="entry name" value="Snail zinc finger protein"/>
    <property type="match status" value="1"/>
</dbReference>
<dbReference type="FunFam" id="3.30.160.60:FF:000207">
    <property type="entry name" value="zinc finger protein SNAI2"/>
    <property type="match status" value="1"/>
</dbReference>
<dbReference type="Gene3D" id="3.30.160.60">
    <property type="entry name" value="Classic Zinc Finger"/>
    <property type="match status" value="4"/>
</dbReference>
<dbReference type="InterPro" id="IPR050527">
    <property type="entry name" value="Snail/Krueppel_Znf"/>
</dbReference>
<dbReference type="InterPro" id="IPR036236">
    <property type="entry name" value="Znf_C2H2_sf"/>
</dbReference>
<dbReference type="InterPro" id="IPR013087">
    <property type="entry name" value="Znf_C2H2_type"/>
</dbReference>
<dbReference type="PANTHER" id="PTHR24388">
    <property type="entry name" value="ZINC FINGER PROTEIN"/>
    <property type="match status" value="1"/>
</dbReference>
<dbReference type="PANTHER" id="PTHR24388:SF37">
    <property type="entry name" value="ZINC FINGER PROTEIN SNAI1"/>
    <property type="match status" value="1"/>
</dbReference>
<dbReference type="Pfam" id="PF00096">
    <property type="entry name" value="zf-C2H2"/>
    <property type="match status" value="5"/>
</dbReference>
<dbReference type="SMART" id="SM00355">
    <property type="entry name" value="ZnF_C2H2"/>
    <property type="match status" value="5"/>
</dbReference>
<dbReference type="SUPFAM" id="SSF57667">
    <property type="entry name" value="beta-beta-alpha zinc fingers"/>
    <property type="match status" value="3"/>
</dbReference>
<dbReference type="PROSITE" id="PS00028">
    <property type="entry name" value="ZINC_FINGER_C2H2_1"/>
    <property type="match status" value="4"/>
</dbReference>
<dbReference type="PROSITE" id="PS50157">
    <property type="entry name" value="ZINC_FINGER_C2H2_2"/>
    <property type="match status" value="5"/>
</dbReference>
<evidence type="ECO:0000250" key="1">
    <source>
        <dbReference type="UniProtKB" id="O95863"/>
    </source>
</evidence>
<evidence type="ECO:0000255" key="2">
    <source>
        <dbReference type="PROSITE-ProRule" id="PRU00042"/>
    </source>
</evidence>
<evidence type="ECO:0000256" key="3">
    <source>
        <dbReference type="SAM" id="MobiDB-lite"/>
    </source>
</evidence>
<evidence type="ECO:0000269" key="4">
    <source>
    </source>
</evidence>
<evidence type="ECO:0000269" key="5">
    <source>
    </source>
</evidence>
<evidence type="ECO:0000269" key="6">
    <source>
    </source>
</evidence>
<evidence type="ECO:0000269" key="7">
    <source>
    </source>
</evidence>
<evidence type="ECO:0000305" key="8"/>
<gene>
    <name type="primary">snai1</name>
    <name type="synonym">sna</name>
</gene>
<name>SNAI1_XENLA</name>
<reference key="1">
    <citation type="journal article" date="1990" name="Development">
        <title>Identification in Xenopus of a structural homologue of the Drosophila gene snail.</title>
        <authorList>
            <person name="Sargent M.G."/>
            <person name="Bennett M.F."/>
        </authorList>
    </citation>
    <scope>NUCLEOTIDE SEQUENCE [MRNA]</scope>
    <scope>FUNCTION</scope>
    <scope>TISSUE SPECIFICITY</scope>
    <scope>DEVELOPMENTAL STAGE</scope>
    <scope>INDUCTION</scope>
    <source>
        <tissue>Neurula</tissue>
    </source>
</reference>
<reference key="2">
    <citation type="submission" date="2003-08" db="EMBL/GenBank/DDBJ databases">
        <authorList>
            <consortium name="NIH - Xenopus Gene Collection (XGC) project"/>
        </authorList>
    </citation>
    <scope>NUCLEOTIDE SEQUENCE [LARGE SCALE MRNA]</scope>
    <source>
        <tissue>Tadpole</tissue>
    </source>
</reference>
<reference key="3">
    <citation type="journal article" date="2003" name="Development">
        <title>Snail precedes slug in the genetic cascade required for the specification and migration of the Xenopus neural crest.</title>
        <authorList>
            <person name="Aybar M.J."/>
            <person name="Nieto M.A."/>
            <person name="Mayor R."/>
        </authorList>
    </citation>
    <scope>FUNCTION</scope>
    <scope>TISSUE SPECIFICITY</scope>
</reference>
<reference key="4">
    <citation type="journal article" date="2008" name="Dev. Cell">
        <title>Ajuba LIM proteins are snail/slug corepressors required for neural crest development in Xenopus.</title>
        <authorList>
            <person name="Langer E.M."/>
            <person name="Feng Y."/>
            <person name="Zhaoyuan H."/>
            <person name="Rauscher F.J. III"/>
            <person name="Kroll K.L."/>
            <person name="Longmore G.D."/>
        </authorList>
    </citation>
    <scope>FUNCTION</scope>
    <scope>INTERACTION WITH LIMD1; AJUBA AND WTIP</scope>
</reference>
<reference key="5">
    <citation type="journal article" date="2016" name="Sci. Rep.">
        <title>Elongator Protein 3 (Elp3) stabilizes Snail1 and regulates neural crest migration in Xenopus.</title>
        <authorList>
            <person name="Yang X."/>
            <person name="Li J."/>
            <person name="Zeng W."/>
            <person name="Li C."/>
            <person name="Mao B."/>
        </authorList>
    </citation>
    <scope>INTERACTION WITH ELP3</scope>
    <scope>UBIQUITINATION</scope>
</reference>
<feature type="chain" id="PRO_0000047031" description="Protein snail homolog Sna">
    <location>
        <begin position="1"/>
        <end position="259"/>
    </location>
</feature>
<feature type="zinc finger region" description="C2H2-type 1" evidence="2">
    <location>
        <begin position="119"/>
        <end position="141"/>
    </location>
</feature>
<feature type="zinc finger region" description="C2H2-type 2" evidence="2">
    <location>
        <begin position="150"/>
        <end position="172"/>
    </location>
</feature>
<feature type="zinc finger region" description="C2H2-type 3" evidence="2">
    <location>
        <begin position="176"/>
        <end position="198"/>
    </location>
</feature>
<feature type="zinc finger region" description="C2H2-type 4" evidence="2">
    <location>
        <begin position="204"/>
        <end position="226"/>
    </location>
</feature>
<feature type="zinc finger region" description="C2H2-type 5" evidence="2">
    <location>
        <begin position="232"/>
        <end position="255"/>
    </location>
</feature>
<feature type="region of interest" description="SNAG domain" evidence="1">
    <location>
        <begin position="1"/>
        <end position="20"/>
    </location>
</feature>
<feature type="region of interest" description="Disordered" evidence="3">
    <location>
        <begin position="71"/>
        <end position="113"/>
    </location>
</feature>
<organism>
    <name type="scientific">Xenopus laevis</name>
    <name type="common">African clawed frog</name>
    <dbReference type="NCBI Taxonomy" id="8355"/>
    <lineage>
        <taxon>Eukaryota</taxon>
        <taxon>Metazoa</taxon>
        <taxon>Chordata</taxon>
        <taxon>Craniata</taxon>
        <taxon>Vertebrata</taxon>
        <taxon>Euteleostomi</taxon>
        <taxon>Amphibia</taxon>
        <taxon>Batrachia</taxon>
        <taxon>Anura</taxon>
        <taxon>Pipoidea</taxon>
        <taxon>Pipidae</taxon>
        <taxon>Xenopodinae</taxon>
        <taxon>Xenopus</taxon>
        <taxon>Xenopus</taxon>
    </lineage>
</organism>